<proteinExistence type="evidence at protein level"/>
<accession>D4N4Z9</accession>
<accession>E5SHY6</accession>
<accession>P86477</accession>
<feature type="signal peptide" evidence="1">
    <location>
        <begin position="1"/>
        <end position="17"/>
    </location>
</feature>
<feature type="chain" id="PRO_5000581037" description="Poly-cysteine and histidine-tailed protein" evidence="1">
    <location>
        <begin position="18"/>
        <end position="424"/>
    </location>
</feature>
<feature type="region of interest" description="Disordered" evidence="2">
    <location>
        <begin position="372"/>
        <end position="424"/>
    </location>
</feature>
<feature type="compositionally biased region" description="Basic and acidic residues" evidence="2">
    <location>
        <begin position="372"/>
        <end position="390"/>
    </location>
</feature>
<feature type="glycosylation site" description="N-linked (GlcNAc...) asparagine" evidence="5">
    <location>
        <position position="291"/>
    </location>
</feature>
<feature type="glycosylation site" description="N-linked (GlcNAc...) asparagine" evidence="5">
    <location>
        <position position="397"/>
    </location>
</feature>
<feature type="sequence conflict" description="In Ref. 1; AA sequence." evidence="4" ref="1">
    <original>I</original>
    <variation>L</variation>
    <location>
        <position position="121"/>
    </location>
</feature>
<sequence>MAFSTIVVLFVAAVGFGNKISSADTCPEFGEWKPWTECLWYPMQNIYDKMTASCGLPGHRNLTNILPLPPGFTIPPPCGHCSFKTRCRTRPKKEGCYPFDGEREICHEHGDICTIAKLPGIGCGWTVLQEVVKQCLSRPDIPEYMRAGYKKLFHMLPKGHCIEKDNQCKCCCGDYEPNEDGTECVKQQDHQCAPFNEPGDWSECLWFPLADMFKKVQSHCGVEGKPEGLSPSSLAPAGFQIPEKCGFCSFRLKCQSREKKEGCFPLKVDKKSCGAEDCPTCGDVCTLDKQNNSCAFTKAMGMKFWNSFAHKAKESNLAHWRRDGYADLFKFLPYGHCKEVGDKCKCCCHPYEPNEDGTACVVKQYCKSLEEVGGKKQQKDQPESEKKAENMPETTGNASHHQHRHHHGDSSSESHEQHHHHHHH</sequence>
<name>PCHTP_TRISP</name>
<organism>
    <name type="scientific">Trichinella spiralis</name>
    <name type="common">Trichina worm</name>
    <dbReference type="NCBI Taxonomy" id="6334"/>
    <lineage>
        <taxon>Eukaryota</taxon>
        <taxon>Metazoa</taxon>
        <taxon>Ecdysozoa</taxon>
        <taxon>Nematoda</taxon>
        <taxon>Enoplea</taxon>
        <taxon>Dorylaimia</taxon>
        <taxon>Trichinellida</taxon>
        <taxon>Trichinellidae</taxon>
        <taxon>Trichinella</taxon>
    </lineage>
</organism>
<dbReference type="EMBL" id="GQ497342">
    <property type="protein sequence ID" value="ADD82426.1"/>
    <property type="molecule type" value="mRNA"/>
</dbReference>
<dbReference type="EMBL" id="ABIR02000995">
    <property type="protein sequence ID" value="EFV55596.1"/>
    <property type="molecule type" value="Genomic_DNA"/>
</dbReference>
<dbReference type="RefSeq" id="XP_003374855.1">
    <property type="nucleotide sequence ID" value="XM_003374807.1"/>
</dbReference>
<dbReference type="SMR" id="D4N4Z9"/>
<dbReference type="iPTMnet" id="D4N4Z9"/>
<dbReference type="EnsemblMetazoa" id="EFV55596">
    <property type="protein sequence ID" value="EFV55596"/>
    <property type="gene ID" value="EFV55596"/>
</dbReference>
<dbReference type="GeneID" id="10904460"/>
<dbReference type="KEGG" id="tsp:Tsp_04041"/>
<dbReference type="CTD" id="10904460"/>
<dbReference type="HOGENOM" id="CLU_647847_0_0_1"/>
<dbReference type="OMA" id="KCCCHPY"/>
<dbReference type="GO" id="GO:0005576">
    <property type="term" value="C:extracellular region"/>
    <property type="evidence" value="ECO:0000314"/>
    <property type="project" value="UniProtKB"/>
</dbReference>
<dbReference type="GO" id="GO:0005506">
    <property type="term" value="F:iron ion binding"/>
    <property type="evidence" value="ECO:0000314"/>
    <property type="project" value="UniProtKB"/>
</dbReference>
<dbReference type="GO" id="GO:0008270">
    <property type="term" value="F:zinc ion binding"/>
    <property type="evidence" value="ECO:0000314"/>
    <property type="project" value="UniProtKB"/>
</dbReference>
<gene>
    <name type="ORF">Tsp_04041</name>
</gene>
<protein>
    <recommendedName>
        <fullName>Poly-cysteine and histidine-tailed protein</fullName>
        <shortName>Ts-PCHTP</shortName>
    </recommendedName>
</protein>
<comment type="function">
    <text evidence="3">Binds iron and zinc. May bind nickel.</text>
</comment>
<comment type="subcellular location">
    <subcellularLocation>
        <location evidence="3">Secreted</location>
    </subcellularLocation>
</comment>
<comment type="tissue specificity">
    <text evidence="3">Expressed in larval tissues like cuticle, hypodermis and muscle (at protein level). Note=Not excreted into striated muscle fibers or nurse cell.</text>
</comment>
<comment type="PTM">
    <text evidence="3">Glycosylated.</text>
</comment>
<comment type="mass spectrometry"/>
<comment type="caution">
    <text evidence="5">At protein level, the N-terminus was determined to be Leu-118 but it is uncertain whether this is the true N-terminus of the mature protein or not.</text>
</comment>
<reference key="1">
    <citation type="journal article" date="2010" name="PLoS ONE">
        <title>A novel secretory poly-cysteine and histidine-tailed metalloprotein (Ts-PCHTP) from Trichinella spiralis (Nematoda).</title>
        <authorList>
            <person name="Radoslavov G."/>
            <person name="Jordanova R."/>
            <person name="Teofanova D."/>
            <person name="Georgieva K."/>
            <person name="Hristov P."/>
            <person name="Salomone-Stagni M."/>
            <person name="Liebau E."/>
            <person name="Bankov I."/>
        </authorList>
    </citation>
    <scope>NUCLEOTIDE SEQUENCE [MRNA]</scope>
    <scope>PROTEIN SEQUENCE OF 118-133</scope>
    <scope>FUNCTION</scope>
    <scope>SUBCELLULAR LOCATION</scope>
    <scope>TISSUE SPECIFICITY</scope>
    <scope>GLYCOSYLATION</scope>
    <scope>MASS SPECTROMETRY</scope>
    <source>
        <tissue>Larva</tissue>
    </source>
</reference>
<reference key="2">
    <citation type="journal article" date="2011" name="Nat. Genet.">
        <title>The draft genome of the parasitic nematode Trichinella spiralis.</title>
        <authorList>
            <person name="Mitreva M."/>
            <person name="Jasmer D.P."/>
            <person name="Zarlenga D.S."/>
            <person name="Wang Z."/>
            <person name="Abubucker S."/>
            <person name="Martin J."/>
            <person name="Taylor C.M."/>
            <person name="Yin Y."/>
            <person name="Fulton L."/>
            <person name="Minx P."/>
            <person name="Yang S.P."/>
            <person name="Warren W.C."/>
            <person name="Fulton R.S."/>
            <person name="Bhonagiri V."/>
            <person name="Zhang X."/>
            <person name="Hallsworth-Pepin K."/>
            <person name="Clifton S.W."/>
            <person name="McCarter J.P."/>
            <person name="Appleton J."/>
            <person name="Mardis E.R."/>
            <person name="Wilson R.K."/>
        </authorList>
    </citation>
    <scope>NUCLEOTIDE SEQUENCE [LARGE SCALE GENOMIC DNA]</scope>
    <source>
        <strain>ISS 195</strain>
    </source>
</reference>
<keyword id="KW-0903">Direct protein sequencing</keyword>
<keyword id="KW-0325">Glycoprotein</keyword>
<keyword id="KW-0408">Iron</keyword>
<keyword id="KW-0479">Metal-binding</keyword>
<keyword id="KW-0964">Secreted</keyword>
<keyword id="KW-0732">Signal</keyword>
<keyword id="KW-0862">Zinc</keyword>
<evidence type="ECO:0000255" key="1"/>
<evidence type="ECO:0000256" key="2">
    <source>
        <dbReference type="SAM" id="MobiDB-lite"/>
    </source>
</evidence>
<evidence type="ECO:0000269" key="3">
    <source>
    </source>
</evidence>
<evidence type="ECO:0000305" key="4"/>
<evidence type="ECO:0000305" key="5">
    <source>
    </source>
</evidence>